<protein>
    <recommendedName>
        <fullName>Aldehyde dehydrogenase</fullName>
        <ecNumber>1.2.1.3</ecNumber>
    </recommendedName>
</protein>
<proteinExistence type="inferred from homology"/>
<sequence>MTVAEQQPQHQGYANPGTPGSVVTFKKRYDNFIGGQWVPPVKGQYFDNASPVDGKVFTQAARSTAEDVELALDAAHRAAPAWGRTSVTERSNILLKIADRMEQNLEMLAVAETWDNGKPVRETLAADLPLAIDHFRYFAGCIRAQEGGLSQIDDSTVAYHFHEPLGVVGQIIPWNFPLLMGVWKLAPALAAGNAVVLKPAEQTPASIMVLMELIADLLPEGVVNVVNGFGLEAGKPLASSPRIAKIAFTGETNTGRLIMGYAADNLIPVTLELGGKSPNIFFDDVMMEDDAFLDKAVEGMVMFALNQGEVCTCPSRALIQESIYDRFMERAVQRVEAITMGHPLDPGTMIGAQASTEQLDKILSYLDIGRAEGAEVLTGGERGQREGLEEGFYVKPTIFKGHNKMRIFQEEIFGPVLAAATFKDEAEALELANDTLYGLGAGLWTRDISRAYRMGRGIQAGRVWTNCYHVYPAHAAFGGYKQSGIGRENHRMMLDHYQQTKNLLVSYSPNKMGFF</sequence>
<organism>
    <name type="scientific">Deinococcus radiodurans (strain ATCC 13939 / DSM 20539 / JCM 16871 / CCUG 27074 / LMG 4051 / NBRC 15346 / NCIMB 9279 / VKM B-1422 / R1)</name>
    <dbReference type="NCBI Taxonomy" id="243230"/>
    <lineage>
        <taxon>Bacteria</taxon>
        <taxon>Thermotogati</taxon>
        <taxon>Deinococcota</taxon>
        <taxon>Deinococci</taxon>
        <taxon>Deinococcales</taxon>
        <taxon>Deinococcaceae</taxon>
        <taxon>Deinococcus</taxon>
    </lineage>
</organism>
<accession>Q9RYG9</accession>
<accession>O32502</accession>
<comment type="catalytic activity">
    <reaction>
        <text>an aldehyde + NAD(+) + H2O = a carboxylate + NADH + 2 H(+)</text>
        <dbReference type="Rhea" id="RHEA:16185"/>
        <dbReference type="ChEBI" id="CHEBI:15377"/>
        <dbReference type="ChEBI" id="CHEBI:15378"/>
        <dbReference type="ChEBI" id="CHEBI:17478"/>
        <dbReference type="ChEBI" id="CHEBI:29067"/>
        <dbReference type="ChEBI" id="CHEBI:57540"/>
        <dbReference type="ChEBI" id="CHEBI:57945"/>
        <dbReference type="EC" id="1.2.1.3"/>
    </reaction>
</comment>
<comment type="similarity">
    <text evidence="3">Belongs to the aldehyde dehydrogenase family.</text>
</comment>
<gene>
    <name type="primary">aldA</name>
    <name type="ordered locus">DR_A0348</name>
</gene>
<keyword id="KW-0520">NAD</keyword>
<keyword id="KW-0560">Oxidoreductase</keyword>
<keyword id="KW-1185">Reference proteome</keyword>
<feature type="chain" id="PRO_0000056447" description="Aldehyde dehydrogenase">
    <location>
        <begin position="1"/>
        <end position="515"/>
    </location>
</feature>
<feature type="region of interest" description="Disordered" evidence="2">
    <location>
        <begin position="1"/>
        <end position="20"/>
    </location>
</feature>
<feature type="compositionally biased region" description="Polar residues" evidence="2">
    <location>
        <begin position="1"/>
        <end position="12"/>
    </location>
</feature>
<feature type="active site" evidence="1">
    <location>
        <position position="272"/>
    </location>
</feature>
<feature type="active site" evidence="1">
    <location>
        <position position="311"/>
    </location>
</feature>
<feature type="binding site" evidence="1">
    <location>
        <begin position="228"/>
        <end position="234"/>
    </location>
    <ligand>
        <name>NAD(+)</name>
        <dbReference type="ChEBI" id="CHEBI:57540"/>
    </ligand>
</feature>
<dbReference type="EC" id="1.2.1.3"/>
<dbReference type="EMBL" id="AE001825">
    <property type="protein sequence ID" value="AAF12436.1"/>
    <property type="molecule type" value="Genomic_DNA"/>
</dbReference>
<dbReference type="EMBL" id="AB003475">
    <property type="protein sequence ID" value="BAA21372.1"/>
    <property type="molecule type" value="Genomic_DNA"/>
</dbReference>
<dbReference type="PIR" id="H75589">
    <property type="entry name" value="H75589"/>
</dbReference>
<dbReference type="RefSeq" id="NP_285671.1">
    <property type="nucleotide sequence ID" value="NC_001264.1"/>
</dbReference>
<dbReference type="RefSeq" id="WP_010889607.1">
    <property type="nucleotide sequence ID" value="NC_001264.1"/>
</dbReference>
<dbReference type="SMR" id="Q9RYG9"/>
<dbReference type="STRING" id="243230.DR_A0348"/>
<dbReference type="PaxDb" id="243230-DR_A0348"/>
<dbReference type="EnsemblBacteria" id="AAF12436">
    <property type="protein sequence ID" value="AAF12436"/>
    <property type="gene ID" value="DR_A0348"/>
</dbReference>
<dbReference type="GeneID" id="69519234"/>
<dbReference type="KEGG" id="dra:DR_A0348"/>
<dbReference type="PATRIC" id="fig|243230.17.peg.3240"/>
<dbReference type="eggNOG" id="COG1012">
    <property type="taxonomic scope" value="Bacteria"/>
</dbReference>
<dbReference type="HOGENOM" id="CLU_005391_0_2_0"/>
<dbReference type="InParanoid" id="Q9RYG9"/>
<dbReference type="OrthoDB" id="9762913at2"/>
<dbReference type="Proteomes" id="UP000002524">
    <property type="component" value="Chromosome 2"/>
</dbReference>
<dbReference type="GO" id="GO:0004029">
    <property type="term" value="F:aldehyde dehydrogenase (NAD+) activity"/>
    <property type="evidence" value="ECO:0007669"/>
    <property type="project" value="UniProtKB-EC"/>
</dbReference>
<dbReference type="CDD" id="cd07116">
    <property type="entry name" value="ALDH_ACDHII-AcoD"/>
    <property type="match status" value="1"/>
</dbReference>
<dbReference type="FunFam" id="3.40.605.10:FF:000001">
    <property type="entry name" value="Aldehyde dehydrogenase 1"/>
    <property type="match status" value="1"/>
</dbReference>
<dbReference type="FunFam" id="3.40.309.10:FF:000012">
    <property type="entry name" value="Betaine aldehyde dehydrogenase"/>
    <property type="match status" value="1"/>
</dbReference>
<dbReference type="Gene3D" id="3.40.605.10">
    <property type="entry name" value="Aldehyde Dehydrogenase, Chain A, domain 1"/>
    <property type="match status" value="1"/>
</dbReference>
<dbReference type="Gene3D" id="3.40.309.10">
    <property type="entry name" value="Aldehyde Dehydrogenase, Chain A, domain 2"/>
    <property type="match status" value="1"/>
</dbReference>
<dbReference type="InterPro" id="IPR016161">
    <property type="entry name" value="Ald_DH/histidinol_DH"/>
</dbReference>
<dbReference type="InterPro" id="IPR016163">
    <property type="entry name" value="Ald_DH_C"/>
</dbReference>
<dbReference type="InterPro" id="IPR016160">
    <property type="entry name" value="Ald_DH_CS_CYS"/>
</dbReference>
<dbReference type="InterPro" id="IPR029510">
    <property type="entry name" value="Ald_DH_CS_GLU"/>
</dbReference>
<dbReference type="InterPro" id="IPR016162">
    <property type="entry name" value="Ald_DH_N"/>
</dbReference>
<dbReference type="InterPro" id="IPR015590">
    <property type="entry name" value="Aldehyde_DH_dom"/>
</dbReference>
<dbReference type="PANTHER" id="PTHR43111">
    <property type="entry name" value="ALDEHYDE DEHYDROGENASE B-RELATED"/>
    <property type="match status" value="1"/>
</dbReference>
<dbReference type="PANTHER" id="PTHR43111:SF1">
    <property type="entry name" value="ALDEHYDE DEHYDROGENASE B-RELATED"/>
    <property type="match status" value="1"/>
</dbReference>
<dbReference type="Pfam" id="PF00171">
    <property type="entry name" value="Aldedh"/>
    <property type="match status" value="1"/>
</dbReference>
<dbReference type="SUPFAM" id="SSF53720">
    <property type="entry name" value="ALDH-like"/>
    <property type="match status" value="1"/>
</dbReference>
<dbReference type="PROSITE" id="PS00070">
    <property type="entry name" value="ALDEHYDE_DEHYDR_CYS"/>
    <property type="match status" value="1"/>
</dbReference>
<dbReference type="PROSITE" id="PS00687">
    <property type="entry name" value="ALDEHYDE_DEHYDR_GLU"/>
    <property type="match status" value="1"/>
</dbReference>
<evidence type="ECO:0000250" key="1"/>
<evidence type="ECO:0000256" key="2">
    <source>
        <dbReference type="SAM" id="MobiDB-lite"/>
    </source>
</evidence>
<evidence type="ECO:0000305" key="3"/>
<name>ALDH_DEIRA</name>
<reference key="1">
    <citation type="journal article" date="1999" name="Science">
        <title>Genome sequence of the radioresistant bacterium Deinococcus radiodurans R1.</title>
        <authorList>
            <person name="White O."/>
            <person name="Eisen J.A."/>
            <person name="Heidelberg J.F."/>
            <person name="Hickey E.K."/>
            <person name="Peterson J.D."/>
            <person name="Dodson R.J."/>
            <person name="Haft D.H."/>
            <person name="Gwinn M.L."/>
            <person name="Nelson W.C."/>
            <person name="Richardson D.L."/>
            <person name="Moffat K.S."/>
            <person name="Qin H."/>
            <person name="Jiang L."/>
            <person name="Pamphile W."/>
            <person name="Crosby M."/>
            <person name="Shen M."/>
            <person name="Vamathevan J.J."/>
            <person name="Lam P."/>
            <person name="McDonald L.A."/>
            <person name="Utterback T.R."/>
            <person name="Zalewski C."/>
            <person name="Makarova K.S."/>
            <person name="Aravind L."/>
            <person name="Daly M.J."/>
            <person name="Minton K.W."/>
            <person name="Fleischmann R.D."/>
            <person name="Ketchum K.A."/>
            <person name="Nelson K.E."/>
            <person name="Salzberg S.L."/>
            <person name="Smith H.O."/>
            <person name="Venter J.C."/>
            <person name="Fraser C.M."/>
        </authorList>
    </citation>
    <scope>NUCLEOTIDE SEQUENCE [LARGE SCALE GENOMIC DNA]</scope>
    <source>
        <strain>ATCC 13939 / DSM 20539 / JCM 16871 / CCUG 27074 / LMG 4051 / NBRC 15346 / NCIMB 9279 / VKM B-1422 / R1</strain>
    </source>
</reference>
<reference key="2">
    <citation type="submission" date="1997-04" db="EMBL/GenBank/DDBJ databases">
        <title>Isolation and characterization of pprA, a novel Deinococcus radiodurans gene involved in DNA repair.</title>
        <authorList>
            <person name="Narumi I."/>
            <person name="Du Z."/>
            <person name="Alatas Z."/>
            <person name="Kitayama S."/>
            <person name="Watanabe H."/>
        </authorList>
    </citation>
    <scope>NUCLEOTIDE SEQUENCE [GENOMIC DNA] OF 1-258</scope>
    <source>
        <strain>KD8301</strain>
    </source>
</reference>